<dbReference type="EC" id="2.5.1.72" evidence="1"/>
<dbReference type="EMBL" id="CP000075">
    <property type="protein sequence ID" value="AAY36591.1"/>
    <property type="molecule type" value="Genomic_DNA"/>
</dbReference>
<dbReference type="RefSeq" id="WP_011267086.1">
    <property type="nucleotide sequence ID" value="NC_007005.1"/>
</dbReference>
<dbReference type="RefSeq" id="YP_234629.1">
    <property type="nucleotide sequence ID" value="NC_007005.1"/>
</dbReference>
<dbReference type="SMR" id="Q4ZW81"/>
<dbReference type="STRING" id="205918.Psyr_1542"/>
<dbReference type="KEGG" id="psb:Psyr_1542"/>
<dbReference type="PATRIC" id="fig|205918.7.peg.1576"/>
<dbReference type="eggNOG" id="COG0379">
    <property type="taxonomic scope" value="Bacteria"/>
</dbReference>
<dbReference type="HOGENOM" id="CLU_047382_1_0_6"/>
<dbReference type="OrthoDB" id="9801204at2"/>
<dbReference type="UniPathway" id="UPA00253">
    <property type="reaction ID" value="UER00327"/>
</dbReference>
<dbReference type="Proteomes" id="UP000000426">
    <property type="component" value="Chromosome"/>
</dbReference>
<dbReference type="GO" id="GO:0005829">
    <property type="term" value="C:cytosol"/>
    <property type="evidence" value="ECO:0007669"/>
    <property type="project" value="TreeGrafter"/>
</dbReference>
<dbReference type="GO" id="GO:0051539">
    <property type="term" value="F:4 iron, 4 sulfur cluster binding"/>
    <property type="evidence" value="ECO:0007669"/>
    <property type="project" value="UniProtKB-KW"/>
</dbReference>
<dbReference type="GO" id="GO:0046872">
    <property type="term" value="F:metal ion binding"/>
    <property type="evidence" value="ECO:0007669"/>
    <property type="project" value="UniProtKB-KW"/>
</dbReference>
<dbReference type="GO" id="GO:0008987">
    <property type="term" value="F:quinolinate synthetase A activity"/>
    <property type="evidence" value="ECO:0007669"/>
    <property type="project" value="UniProtKB-UniRule"/>
</dbReference>
<dbReference type="GO" id="GO:0034628">
    <property type="term" value="P:'de novo' NAD biosynthetic process from L-aspartate"/>
    <property type="evidence" value="ECO:0007669"/>
    <property type="project" value="TreeGrafter"/>
</dbReference>
<dbReference type="FunFam" id="3.40.50.10800:FF:000001">
    <property type="entry name" value="Quinolinate synthase A"/>
    <property type="match status" value="1"/>
</dbReference>
<dbReference type="FunFam" id="3.40.50.10800:FF:000003">
    <property type="entry name" value="Quinolinate synthase A"/>
    <property type="match status" value="1"/>
</dbReference>
<dbReference type="Gene3D" id="3.40.50.10800">
    <property type="entry name" value="NadA-like"/>
    <property type="match status" value="3"/>
</dbReference>
<dbReference type="HAMAP" id="MF_00567">
    <property type="entry name" value="NadA_type1"/>
    <property type="match status" value="1"/>
</dbReference>
<dbReference type="InterPro" id="IPR003473">
    <property type="entry name" value="NadA"/>
</dbReference>
<dbReference type="InterPro" id="IPR036094">
    <property type="entry name" value="NadA_sf"/>
</dbReference>
<dbReference type="InterPro" id="IPR023513">
    <property type="entry name" value="Quinolinate_synth_A_type1"/>
</dbReference>
<dbReference type="NCBIfam" id="TIGR00550">
    <property type="entry name" value="nadA"/>
    <property type="match status" value="1"/>
</dbReference>
<dbReference type="NCBIfam" id="NF006877">
    <property type="entry name" value="PRK09375.1-1"/>
    <property type="match status" value="1"/>
</dbReference>
<dbReference type="NCBIfam" id="NF006878">
    <property type="entry name" value="PRK09375.1-2"/>
    <property type="match status" value="1"/>
</dbReference>
<dbReference type="PANTHER" id="PTHR30573:SF0">
    <property type="entry name" value="QUINOLINATE SYNTHASE, CHLOROPLASTIC"/>
    <property type="match status" value="1"/>
</dbReference>
<dbReference type="PANTHER" id="PTHR30573">
    <property type="entry name" value="QUINOLINATE SYNTHETASE A"/>
    <property type="match status" value="1"/>
</dbReference>
<dbReference type="Pfam" id="PF02445">
    <property type="entry name" value="NadA"/>
    <property type="match status" value="1"/>
</dbReference>
<dbReference type="SUPFAM" id="SSF142754">
    <property type="entry name" value="NadA-like"/>
    <property type="match status" value="1"/>
</dbReference>
<organism>
    <name type="scientific">Pseudomonas syringae pv. syringae (strain B728a)</name>
    <dbReference type="NCBI Taxonomy" id="205918"/>
    <lineage>
        <taxon>Bacteria</taxon>
        <taxon>Pseudomonadati</taxon>
        <taxon>Pseudomonadota</taxon>
        <taxon>Gammaproteobacteria</taxon>
        <taxon>Pseudomonadales</taxon>
        <taxon>Pseudomonadaceae</taxon>
        <taxon>Pseudomonas</taxon>
        <taxon>Pseudomonas syringae</taxon>
    </lineage>
</organism>
<feature type="chain" id="PRO_1000024967" description="Quinolinate synthase">
    <location>
        <begin position="1"/>
        <end position="352"/>
    </location>
</feature>
<feature type="binding site" evidence="1">
    <location>
        <position position="48"/>
    </location>
    <ligand>
        <name>iminosuccinate</name>
        <dbReference type="ChEBI" id="CHEBI:77875"/>
    </ligand>
</feature>
<feature type="binding site" evidence="1">
    <location>
        <position position="69"/>
    </location>
    <ligand>
        <name>iminosuccinate</name>
        <dbReference type="ChEBI" id="CHEBI:77875"/>
    </ligand>
</feature>
<feature type="binding site" evidence="1">
    <location>
        <position position="114"/>
    </location>
    <ligand>
        <name>[4Fe-4S] cluster</name>
        <dbReference type="ChEBI" id="CHEBI:49883"/>
    </ligand>
</feature>
<feature type="binding site" evidence="1">
    <location>
        <begin position="140"/>
        <end position="142"/>
    </location>
    <ligand>
        <name>iminosuccinate</name>
        <dbReference type="ChEBI" id="CHEBI:77875"/>
    </ligand>
</feature>
<feature type="binding site" evidence="1">
    <location>
        <position position="157"/>
    </location>
    <ligand>
        <name>iminosuccinate</name>
        <dbReference type="ChEBI" id="CHEBI:77875"/>
    </ligand>
</feature>
<feature type="binding site" evidence="1">
    <location>
        <position position="201"/>
    </location>
    <ligand>
        <name>[4Fe-4S] cluster</name>
        <dbReference type="ChEBI" id="CHEBI:49883"/>
    </ligand>
</feature>
<feature type="binding site" evidence="1">
    <location>
        <begin position="227"/>
        <end position="229"/>
    </location>
    <ligand>
        <name>iminosuccinate</name>
        <dbReference type="ChEBI" id="CHEBI:77875"/>
    </ligand>
</feature>
<feature type="binding site" evidence="1">
    <location>
        <position position="244"/>
    </location>
    <ligand>
        <name>iminosuccinate</name>
        <dbReference type="ChEBI" id="CHEBI:77875"/>
    </ligand>
</feature>
<feature type="binding site" evidence="1">
    <location>
        <position position="298"/>
    </location>
    <ligand>
        <name>[4Fe-4S] cluster</name>
        <dbReference type="ChEBI" id="CHEBI:49883"/>
    </ligand>
</feature>
<protein>
    <recommendedName>
        <fullName evidence="1">Quinolinate synthase</fullName>
        <ecNumber evidence="1">2.5.1.72</ecNumber>
    </recommendedName>
</protein>
<sequence length="352" mass="38751">MTQISERFLVQAHLDAKQPRTLSPAEQARYRADIAAELKKQDAVLVAHYYCDPVIQALAEETGGCVADSLEMARFSNNHAASTVLVAGVRFMGETAKILNPEKRVFMPTLEATCSLDVGCPVDEFSAFCDQHPERTVVVYANTSAAVKARADWVVTSGCALEIVESLMDNGEKIIWAPDKHLGRYIQRETGADMLLWDGACIVHEEFKSKQLEDMKALYPEAAILVHPESPEAVIELADVVGSTSQMIAAAQRLPNKTFIVATDRGIFYKMQQLCPDKIFIEAPTAGNGAACRSCAHCPWMAMNTLERTLQCLREGSNEIFVDPALIPHAVRPLQRMLDFTQAARLRQAGNA</sequence>
<evidence type="ECO:0000255" key="1">
    <source>
        <dbReference type="HAMAP-Rule" id="MF_00567"/>
    </source>
</evidence>
<gene>
    <name evidence="1" type="primary">nadA</name>
    <name type="ordered locus">Psyr_1542</name>
</gene>
<reference key="1">
    <citation type="journal article" date="2005" name="Proc. Natl. Acad. Sci. U.S.A.">
        <title>Comparison of the complete genome sequences of Pseudomonas syringae pv. syringae B728a and pv. tomato DC3000.</title>
        <authorList>
            <person name="Feil H."/>
            <person name="Feil W.S."/>
            <person name="Chain P."/>
            <person name="Larimer F."/>
            <person name="Dibartolo G."/>
            <person name="Copeland A."/>
            <person name="Lykidis A."/>
            <person name="Trong S."/>
            <person name="Nolan M."/>
            <person name="Goltsman E."/>
            <person name="Thiel J."/>
            <person name="Malfatti S."/>
            <person name="Loper J.E."/>
            <person name="Lapidus A."/>
            <person name="Detter J.C."/>
            <person name="Land M."/>
            <person name="Richardson P.M."/>
            <person name="Kyrpides N.C."/>
            <person name="Ivanova N."/>
            <person name="Lindow S.E."/>
        </authorList>
    </citation>
    <scope>NUCLEOTIDE SEQUENCE [LARGE SCALE GENOMIC DNA]</scope>
    <source>
        <strain>B728a</strain>
    </source>
</reference>
<accession>Q4ZW81</accession>
<keyword id="KW-0004">4Fe-4S</keyword>
<keyword id="KW-0963">Cytoplasm</keyword>
<keyword id="KW-0408">Iron</keyword>
<keyword id="KW-0411">Iron-sulfur</keyword>
<keyword id="KW-0479">Metal-binding</keyword>
<keyword id="KW-0662">Pyridine nucleotide biosynthesis</keyword>
<keyword id="KW-0808">Transferase</keyword>
<comment type="function">
    <text evidence="1">Catalyzes the condensation of iminoaspartate with dihydroxyacetone phosphate to form quinolinate.</text>
</comment>
<comment type="catalytic activity">
    <reaction evidence="1">
        <text>iminosuccinate + dihydroxyacetone phosphate = quinolinate + phosphate + 2 H2O + H(+)</text>
        <dbReference type="Rhea" id="RHEA:25888"/>
        <dbReference type="ChEBI" id="CHEBI:15377"/>
        <dbReference type="ChEBI" id="CHEBI:15378"/>
        <dbReference type="ChEBI" id="CHEBI:29959"/>
        <dbReference type="ChEBI" id="CHEBI:43474"/>
        <dbReference type="ChEBI" id="CHEBI:57642"/>
        <dbReference type="ChEBI" id="CHEBI:77875"/>
        <dbReference type="EC" id="2.5.1.72"/>
    </reaction>
    <physiologicalReaction direction="left-to-right" evidence="1">
        <dbReference type="Rhea" id="RHEA:25889"/>
    </physiologicalReaction>
</comment>
<comment type="cofactor">
    <cofactor evidence="1">
        <name>[4Fe-4S] cluster</name>
        <dbReference type="ChEBI" id="CHEBI:49883"/>
    </cofactor>
    <text evidence="1">Binds 1 [4Fe-4S] cluster per subunit.</text>
</comment>
<comment type="pathway">
    <text evidence="1">Cofactor biosynthesis; NAD(+) biosynthesis; quinolinate from iminoaspartate: step 1/1.</text>
</comment>
<comment type="subcellular location">
    <subcellularLocation>
        <location evidence="1">Cytoplasm</location>
    </subcellularLocation>
</comment>
<comment type="similarity">
    <text evidence="1">Belongs to the quinolinate synthase family. Type 1 subfamily.</text>
</comment>
<proteinExistence type="inferred from homology"/>
<name>NADA_PSEU2</name>